<accession>Q04GN4</accession>
<gene>
    <name evidence="1" type="primary">rimP</name>
    <name type="ordered locus">OEOE_0429</name>
</gene>
<comment type="function">
    <text evidence="1">Required for maturation of 30S ribosomal subunits.</text>
</comment>
<comment type="subcellular location">
    <subcellularLocation>
        <location evidence="1">Cytoplasm</location>
    </subcellularLocation>
</comment>
<comment type="similarity">
    <text evidence="1">Belongs to the RimP family.</text>
</comment>
<organism>
    <name type="scientific">Oenococcus oeni (strain ATCC BAA-331 / PSU-1)</name>
    <dbReference type="NCBI Taxonomy" id="203123"/>
    <lineage>
        <taxon>Bacteria</taxon>
        <taxon>Bacillati</taxon>
        <taxon>Bacillota</taxon>
        <taxon>Bacilli</taxon>
        <taxon>Lactobacillales</taxon>
        <taxon>Lactobacillaceae</taxon>
        <taxon>Oenococcus</taxon>
    </lineage>
</organism>
<proteinExistence type="inferred from homology"/>
<dbReference type="EMBL" id="CP000411">
    <property type="protein sequence ID" value="ABJ56388.1"/>
    <property type="molecule type" value="Genomic_DNA"/>
</dbReference>
<dbReference type="RefSeq" id="WP_002817836.1">
    <property type="nucleotide sequence ID" value="NC_008528.1"/>
</dbReference>
<dbReference type="SMR" id="Q04GN4"/>
<dbReference type="STRING" id="203123.OEOE_0429"/>
<dbReference type="KEGG" id="ooe:OEOE_0429"/>
<dbReference type="eggNOG" id="COG0779">
    <property type="taxonomic scope" value="Bacteria"/>
</dbReference>
<dbReference type="HOGENOM" id="CLU_070525_2_0_9"/>
<dbReference type="Proteomes" id="UP000000774">
    <property type="component" value="Chromosome"/>
</dbReference>
<dbReference type="GO" id="GO:0005829">
    <property type="term" value="C:cytosol"/>
    <property type="evidence" value="ECO:0007669"/>
    <property type="project" value="TreeGrafter"/>
</dbReference>
<dbReference type="GO" id="GO:0000028">
    <property type="term" value="P:ribosomal small subunit assembly"/>
    <property type="evidence" value="ECO:0007669"/>
    <property type="project" value="TreeGrafter"/>
</dbReference>
<dbReference type="GO" id="GO:0006412">
    <property type="term" value="P:translation"/>
    <property type="evidence" value="ECO:0007669"/>
    <property type="project" value="TreeGrafter"/>
</dbReference>
<dbReference type="CDD" id="cd01734">
    <property type="entry name" value="YlxS_C"/>
    <property type="match status" value="1"/>
</dbReference>
<dbReference type="Gene3D" id="2.30.30.180">
    <property type="entry name" value="Ribosome maturation factor RimP, C-terminal domain"/>
    <property type="match status" value="1"/>
</dbReference>
<dbReference type="Gene3D" id="3.30.300.70">
    <property type="entry name" value="RimP-like superfamily, N-terminal"/>
    <property type="match status" value="1"/>
</dbReference>
<dbReference type="HAMAP" id="MF_01077">
    <property type="entry name" value="RimP"/>
    <property type="match status" value="1"/>
</dbReference>
<dbReference type="InterPro" id="IPR003728">
    <property type="entry name" value="Ribosome_maturation_RimP"/>
</dbReference>
<dbReference type="InterPro" id="IPR028998">
    <property type="entry name" value="RimP_C"/>
</dbReference>
<dbReference type="InterPro" id="IPR036847">
    <property type="entry name" value="RimP_C_sf"/>
</dbReference>
<dbReference type="InterPro" id="IPR028989">
    <property type="entry name" value="RimP_N"/>
</dbReference>
<dbReference type="InterPro" id="IPR035956">
    <property type="entry name" value="RimP_N_sf"/>
</dbReference>
<dbReference type="PANTHER" id="PTHR33867">
    <property type="entry name" value="RIBOSOME MATURATION FACTOR RIMP"/>
    <property type="match status" value="1"/>
</dbReference>
<dbReference type="PANTHER" id="PTHR33867:SF1">
    <property type="entry name" value="RIBOSOME MATURATION FACTOR RIMP"/>
    <property type="match status" value="1"/>
</dbReference>
<dbReference type="Pfam" id="PF17384">
    <property type="entry name" value="DUF150_C"/>
    <property type="match status" value="1"/>
</dbReference>
<dbReference type="Pfam" id="PF02576">
    <property type="entry name" value="RimP_N"/>
    <property type="match status" value="1"/>
</dbReference>
<dbReference type="SUPFAM" id="SSF74942">
    <property type="entry name" value="YhbC-like, C-terminal domain"/>
    <property type="match status" value="1"/>
</dbReference>
<dbReference type="SUPFAM" id="SSF75420">
    <property type="entry name" value="YhbC-like, N-terminal domain"/>
    <property type="match status" value="1"/>
</dbReference>
<protein>
    <recommendedName>
        <fullName evidence="1">Ribosome maturation factor RimP</fullName>
    </recommendedName>
</protein>
<keyword id="KW-0963">Cytoplasm</keyword>
<keyword id="KW-1185">Reference proteome</keyword>
<keyword id="KW-0690">Ribosome biogenesis</keyword>
<name>RIMP_OENOB</name>
<reference key="1">
    <citation type="journal article" date="2006" name="Proc. Natl. Acad. Sci. U.S.A.">
        <title>Comparative genomics of the lactic acid bacteria.</title>
        <authorList>
            <person name="Makarova K.S."/>
            <person name="Slesarev A."/>
            <person name="Wolf Y.I."/>
            <person name="Sorokin A."/>
            <person name="Mirkin B."/>
            <person name="Koonin E.V."/>
            <person name="Pavlov A."/>
            <person name="Pavlova N."/>
            <person name="Karamychev V."/>
            <person name="Polouchine N."/>
            <person name="Shakhova V."/>
            <person name="Grigoriev I."/>
            <person name="Lou Y."/>
            <person name="Rohksar D."/>
            <person name="Lucas S."/>
            <person name="Huang K."/>
            <person name="Goodstein D.M."/>
            <person name="Hawkins T."/>
            <person name="Plengvidhya V."/>
            <person name="Welker D."/>
            <person name="Hughes J."/>
            <person name="Goh Y."/>
            <person name="Benson A."/>
            <person name="Baldwin K."/>
            <person name="Lee J.-H."/>
            <person name="Diaz-Muniz I."/>
            <person name="Dosti B."/>
            <person name="Smeianov V."/>
            <person name="Wechter W."/>
            <person name="Barabote R."/>
            <person name="Lorca G."/>
            <person name="Altermann E."/>
            <person name="Barrangou R."/>
            <person name="Ganesan B."/>
            <person name="Xie Y."/>
            <person name="Rawsthorne H."/>
            <person name="Tamir D."/>
            <person name="Parker C."/>
            <person name="Breidt F."/>
            <person name="Broadbent J.R."/>
            <person name="Hutkins R."/>
            <person name="O'Sullivan D."/>
            <person name="Steele J."/>
            <person name="Unlu G."/>
            <person name="Saier M.H. Jr."/>
            <person name="Klaenhammer T."/>
            <person name="Richardson P."/>
            <person name="Kozyavkin S."/>
            <person name="Weimer B.C."/>
            <person name="Mills D.A."/>
        </authorList>
    </citation>
    <scope>NUCLEOTIDE SEQUENCE [LARGE SCALE GENOMIC DNA]</scope>
    <source>
        <strain>ATCC BAA-331 / PSU-1</strain>
    </source>
</reference>
<feature type="chain" id="PRO_0000384723" description="Ribosome maturation factor RimP">
    <location>
        <begin position="1"/>
        <end position="156"/>
    </location>
</feature>
<sequence length="156" mass="17482">MNLKQIDTIKEKIQPILSEKHLLLWDLSFFGGSPAVLTILIDGQDHQAIRMNQISEVTSLISDALDKVEPDPFPDRYNLDISSPGIDRSIKTDEHLDWALGQPIKLNLFEKIDGSKSAEGILKSFSDLEISLEVSPAEVKNFPREKISKISLNQEA</sequence>
<evidence type="ECO:0000255" key="1">
    <source>
        <dbReference type="HAMAP-Rule" id="MF_01077"/>
    </source>
</evidence>